<protein>
    <recommendedName>
        <fullName>Uncharacterized protein jhp_1419</fullName>
    </recommendedName>
</protein>
<name>Y1419_HELPJ</name>
<proteinExistence type="predicted"/>
<reference key="1">
    <citation type="journal article" date="1999" name="Nature">
        <title>Genomic sequence comparison of two unrelated isolates of the human gastric pathogen Helicobacter pylori.</title>
        <authorList>
            <person name="Alm R.A."/>
            <person name="Ling L.-S.L."/>
            <person name="Moir D.T."/>
            <person name="King B.L."/>
            <person name="Brown E.D."/>
            <person name="Doig P.C."/>
            <person name="Smith D.R."/>
            <person name="Noonan B."/>
            <person name="Guild B.C."/>
            <person name="deJonge B.L."/>
            <person name="Carmel G."/>
            <person name="Tummino P.J."/>
            <person name="Caruso A."/>
            <person name="Uria-Nickelsen M."/>
            <person name="Mills D.M."/>
            <person name="Ives C."/>
            <person name="Gibson R."/>
            <person name="Merberg D."/>
            <person name="Mills S.D."/>
            <person name="Jiang Q."/>
            <person name="Taylor D.E."/>
            <person name="Vovis G.F."/>
            <person name="Trust T.J."/>
        </authorList>
    </citation>
    <scope>NUCLEOTIDE SEQUENCE [LARGE SCALE GENOMIC DNA]</scope>
    <source>
        <strain>J99 / ATCC 700824</strain>
    </source>
</reference>
<gene>
    <name type="ordered locus">jhp_1419</name>
</gene>
<dbReference type="EMBL" id="AE001439">
    <property type="protein sequence ID" value="AAD06998.1"/>
    <property type="molecule type" value="Genomic_DNA"/>
</dbReference>
<dbReference type="RefSeq" id="WP_000461837.1">
    <property type="nucleotide sequence ID" value="NZ_CP011330.1"/>
</dbReference>
<dbReference type="SMR" id="P64666"/>
<dbReference type="KEGG" id="hpj:jhp_1419"/>
<dbReference type="PATRIC" id="fig|85963.30.peg.1128"/>
<dbReference type="Proteomes" id="UP000000804">
    <property type="component" value="Chromosome"/>
</dbReference>
<dbReference type="Gene3D" id="1.20.58.90">
    <property type="match status" value="1"/>
</dbReference>
<dbReference type="InterPro" id="IPR019469">
    <property type="entry name" value="DUF2443"/>
</dbReference>
<dbReference type="InterPro" id="IPR038018">
    <property type="entry name" value="HP_1531"/>
</dbReference>
<dbReference type="Pfam" id="PF10398">
    <property type="entry name" value="DUF2443"/>
    <property type="match status" value="1"/>
</dbReference>
<dbReference type="SUPFAM" id="SSF140496">
    <property type="entry name" value="HP1531-like"/>
    <property type="match status" value="1"/>
</dbReference>
<sequence>MFEKIRKILADIEDSQNEIEMLLKLANLSLGDFIEIKRGSMDMPKGVNEAFFTQLSEEVERLKELINALNKIKKGLLVF</sequence>
<accession>P64666</accession>
<accession>O26059</accession>
<feature type="chain" id="PRO_0000128701" description="Uncharacterized protein jhp_1419">
    <location>
        <begin position="1"/>
        <end position="79"/>
    </location>
</feature>
<organism>
    <name type="scientific">Helicobacter pylori (strain J99 / ATCC 700824)</name>
    <name type="common">Campylobacter pylori J99</name>
    <dbReference type="NCBI Taxonomy" id="85963"/>
    <lineage>
        <taxon>Bacteria</taxon>
        <taxon>Pseudomonadati</taxon>
        <taxon>Campylobacterota</taxon>
        <taxon>Epsilonproteobacteria</taxon>
        <taxon>Campylobacterales</taxon>
        <taxon>Helicobacteraceae</taxon>
        <taxon>Helicobacter</taxon>
    </lineage>
</organism>